<feature type="signal peptide" evidence="1">
    <location>
        <begin position="1"/>
        <end position="27"/>
    </location>
</feature>
<feature type="chain" id="PRO_0000413703" description="Gibberellin-regulated protein 5">
    <location>
        <begin position="28"/>
        <end position="97"/>
    </location>
</feature>
<name>GASA5_ARATH</name>
<reference key="1">
    <citation type="journal article" date="2000" name="Nature">
        <title>Sequence and analysis of chromosome 3 of the plant Arabidopsis thaliana.</title>
        <authorList>
            <person name="Salanoubat M."/>
            <person name="Lemcke K."/>
            <person name="Rieger M."/>
            <person name="Ansorge W."/>
            <person name="Unseld M."/>
            <person name="Fartmann B."/>
            <person name="Valle G."/>
            <person name="Bloecker H."/>
            <person name="Perez-Alonso M."/>
            <person name="Obermaier B."/>
            <person name="Delseny M."/>
            <person name="Boutry M."/>
            <person name="Grivell L.A."/>
            <person name="Mache R."/>
            <person name="Puigdomenech P."/>
            <person name="De Simone V."/>
            <person name="Choisne N."/>
            <person name="Artiguenave F."/>
            <person name="Robert C."/>
            <person name="Brottier P."/>
            <person name="Wincker P."/>
            <person name="Cattolico L."/>
            <person name="Weissenbach J."/>
            <person name="Saurin W."/>
            <person name="Quetier F."/>
            <person name="Schaefer M."/>
            <person name="Mueller-Auer S."/>
            <person name="Gabel C."/>
            <person name="Fuchs M."/>
            <person name="Benes V."/>
            <person name="Wurmbach E."/>
            <person name="Drzonek H."/>
            <person name="Erfle H."/>
            <person name="Jordan N."/>
            <person name="Bangert S."/>
            <person name="Wiedelmann R."/>
            <person name="Kranz H."/>
            <person name="Voss H."/>
            <person name="Holland R."/>
            <person name="Brandt P."/>
            <person name="Nyakatura G."/>
            <person name="Vezzi A."/>
            <person name="D'Angelo M."/>
            <person name="Pallavicini A."/>
            <person name="Toppo S."/>
            <person name="Simionati B."/>
            <person name="Conrad A."/>
            <person name="Hornischer K."/>
            <person name="Kauer G."/>
            <person name="Loehnert T.-H."/>
            <person name="Nordsiek G."/>
            <person name="Reichelt J."/>
            <person name="Scharfe M."/>
            <person name="Schoen O."/>
            <person name="Bargues M."/>
            <person name="Terol J."/>
            <person name="Climent J."/>
            <person name="Navarro P."/>
            <person name="Collado C."/>
            <person name="Perez-Perez A."/>
            <person name="Ottenwaelder B."/>
            <person name="Duchemin D."/>
            <person name="Cooke R."/>
            <person name="Laudie M."/>
            <person name="Berger-Llauro C."/>
            <person name="Purnelle B."/>
            <person name="Masuy D."/>
            <person name="de Haan M."/>
            <person name="Maarse A.C."/>
            <person name="Alcaraz J.-P."/>
            <person name="Cottet A."/>
            <person name="Casacuberta E."/>
            <person name="Monfort A."/>
            <person name="Argiriou A."/>
            <person name="Flores M."/>
            <person name="Liguori R."/>
            <person name="Vitale D."/>
            <person name="Mannhaupt G."/>
            <person name="Haase D."/>
            <person name="Schoof H."/>
            <person name="Rudd S."/>
            <person name="Zaccaria P."/>
            <person name="Mewes H.-W."/>
            <person name="Mayer K.F.X."/>
            <person name="Kaul S."/>
            <person name="Town C.D."/>
            <person name="Koo H.L."/>
            <person name="Tallon L.J."/>
            <person name="Jenkins J."/>
            <person name="Rooney T."/>
            <person name="Rizzo M."/>
            <person name="Walts A."/>
            <person name="Utterback T."/>
            <person name="Fujii C.Y."/>
            <person name="Shea T.P."/>
            <person name="Creasy T.H."/>
            <person name="Haas B."/>
            <person name="Maiti R."/>
            <person name="Wu D."/>
            <person name="Peterson J."/>
            <person name="Van Aken S."/>
            <person name="Pai G."/>
            <person name="Militscher J."/>
            <person name="Sellers P."/>
            <person name="Gill J.E."/>
            <person name="Feldblyum T.V."/>
            <person name="Preuss D."/>
            <person name="Lin X."/>
            <person name="Nierman W.C."/>
            <person name="Salzberg S.L."/>
            <person name="White O."/>
            <person name="Venter J.C."/>
            <person name="Fraser C.M."/>
            <person name="Kaneko T."/>
            <person name="Nakamura Y."/>
            <person name="Sato S."/>
            <person name="Kato T."/>
            <person name="Asamizu E."/>
            <person name="Sasamoto S."/>
            <person name="Kimura T."/>
            <person name="Idesawa K."/>
            <person name="Kawashima K."/>
            <person name="Kishida Y."/>
            <person name="Kiyokawa C."/>
            <person name="Kohara M."/>
            <person name="Matsumoto M."/>
            <person name="Matsuno A."/>
            <person name="Muraki A."/>
            <person name="Nakayama S."/>
            <person name="Nakazaki N."/>
            <person name="Shinpo S."/>
            <person name="Takeuchi C."/>
            <person name="Wada T."/>
            <person name="Watanabe A."/>
            <person name="Yamada M."/>
            <person name="Yasuda M."/>
            <person name="Tabata S."/>
        </authorList>
    </citation>
    <scope>NUCLEOTIDE SEQUENCE [LARGE SCALE GENOMIC DNA]</scope>
    <source>
        <strain>cv. Columbia</strain>
    </source>
</reference>
<reference key="2">
    <citation type="journal article" date="2017" name="Plant J.">
        <title>Araport11: a complete reannotation of the Arabidopsis thaliana reference genome.</title>
        <authorList>
            <person name="Cheng C.Y."/>
            <person name="Krishnakumar V."/>
            <person name="Chan A.P."/>
            <person name="Thibaud-Nissen F."/>
            <person name="Schobel S."/>
            <person name="Town C.D."/>
        </authorList>
    </citation>
    <scope>GENOME REANNOTATION</scope>
    <source>
        <strain>cv. Columbia</strain>
    </source>
</reference>
<reference key="3">
    <citation type="journal article" date="2003" name="Science">
        <title>Empirical analysis of transcriptional activity in the Arabidopsis genome.</title>
        <authorList>
            <person name="Yamada K."/>
            <person name="Lim J."/>
            <person name="Dale J.M."/>
            <person name="Chen H."/>
            <person name="Shinn P."/>
            <person name="Palm C.J."/>
            <person name="Southwick A.M."/>
            <person name="Wu H.C."/>
            <person name="Kim C.J."/>
            <person name="Nguyen M."/>
            <person name="Pham P.K."/>
            <person name="Cheuk R.F."/>
            <person name="Karlin-Newmann G."/>
            <person name="Liu S.X."/>
            <person name="Lam B."/>
            <person name="Sakano H."/>
            <person name="Wu T."/>
            <person name="Yu G."/>
            <person name="Miranda M."/>
            <person name="Quach H.L."/>
            <person name="Tripp M."/>
            <person name="Chang C.H."/>
            <person name="Lee J.M."/>
            <person name="Toriumi M.J."/>
            <person name="Chan M.M."/>
            <person name="Tang C.C."/>
            <person name="Onodera C.S."/>
            <person name="Deng J.M."/>
            <person name="Akiyama K."/>
            <person name="Ansari Y."/>
            <person name="Arakawa T."/>
            <person name="Banh J."/>
            <person name="Banno F."/>
            <person name="Bowser L."/>
            <person name="Brooks S.Y."/>
            <person name="Carninci P."/>
            <person name="Chao Q."/>
            <person name="Choy N."/>
            <person name="Enju A."/>
            <person name="Goldsmith A.D."/>
            <person name="Gurjal M."/>
            <person name="Hansen N.F."/>
            <person name="Hayashizaki Y."/>
            <person name="Johnson-Hopson C."/>
            <person name="Hsuan V.W."/>
            <person name="Iida K."/>
            <person name="Karnes M."/>
            <person name="Khan S."/>
            <person name="Koesema E."/>
            <person name="Ishida J."/>
            <person name="Jiang P.X."/>
            <person name="Jones T."/>
            <person name="Kawai J."/>
            <person name="Kamiya A."/>
            <person name="Meyers C."/>
            <person name="Nakajima M."/>
            <person name="Narusaka M."/>
            <person name="Seki M."/>
            <person name="Sakurai T."/>
            <person name="Satou M."/>
            <person name="Tamse R."/>
            <person name="Vaysberg M."/>
            <person name="Wallender E.K."/>
            <person name="Wong C."/>
            <person name="Yamamura Y."/>
            <person name="Yuan S."/>
            <person name="Shinozaki K."/>
            <person name="Davis R.W."/>
            <person name="Theologis A."/>
            <person name="Ecker J.R."/>
        </authorList>
    </citation>
    <scope>NUCLEOTIDE SEQUENCE [LARGE SCALE MRNA]</scope>
    <source>
        <strain>cv. Columbia</strain>
    </source>
</reference>
<reference key="4">
    <citation type="journal article" date="2009" name="Plant Mol. Biol.">
        <title>GASA5, a regulator of flowering time and stem growth in Arabidopsis thaliana.</title>
        <authorList>
            <person name="Zhang S."/>
            <person name="Yang C."/>
            <person name="Peng J."/>
            <person name="Sun S."/>
            <person name="Wang X."/>
        </authorList>
    </citation>
    <scope>FUNCTION</scope>
    <scope>SUBCELLULAR LOCATION</scope>
    <scope>TISSUE SPECIFICITY</scope>
    <scope>INDUCTION</scope>
    <scope>DISRUPTION PHENOTYPE</scope>
</reference>
<reference key="5">
    <citation type="journal article" date="2011" name="J. Plant Physiol.">
        <title>Overexpression of GASA5 increases the sensitivity of Arabidopsis to heat stress.</title>
        <authorList>
            <person name="Zhang S."/>
            <person name="Wang X."/>
        </authorList>
    </citation>
    <scope>FUNCTION</scope>
</reference>
<evidence type="ECO:0000255" key="1"/>
<evidence type="ECO:0000269" key="2">
    <source>
    </source>
</evidence>
<evidence type="ECO:0000269" key="3">
    <source>
    </source>
</evidence>
<evidence type="ECO:0000305" key="4"/>
<organism>
    <name type="scientific">Arabidopsis thaliana</name>
    <name type="common">Mouse-ear cress</name>
    <dbReference type="NCBI Taxonomy" id="3702"/>
    <lineage>
        <taxon>Eukaryota</taxon>
        <taxon>Viridiplantae</taxon>
        <taxon>Streptophyta</taxon>
        <taxon>Embryophyta</taxon>
        <taxon>Tracheophyta</taxon>
        <taxon>Spermatophyta</taxon>
        <taxon>Magnoliopsida</taxon>
        <taxon>eudicotyledons</taxon>
        <taxon>Gunneridae</taxon>
        <taxon>Pentapetalae</taxon>
        <taxon>rosids</taxon>
        <taxon>malvids</taxon>
        <taxon>Brassicales</taxon>
        <taxon>Brassicaceae</taxon>
        <taxon>Camelineae</taxon>
        <taxon>Arabidopsis</taxon>
    </lineage>
</organism>
<keyword id="KW-0134">Cell wall</keyword>
<keyword id="KW-1015">Disulfide bond</keyword>
<keyword id="KW-0272">Extracellular matrix</keyword>
<keyword id="KW-0939">Gibberellin signaling pathway</keyword>
<keyword id="KW-1185">Reference proteome</keyword>
<keyword id="KW-0964">Secreted</keyword>
<keyword id="KW-0732">Signal</keyword>
<gene>
    <name type="primary">GASA5</name>
    <name type="ordered locus">At3g02885</name>
    <name type="ORF">F13E7</name>
</gene>
<sequence length="97" mass="10845">MANCIRRNALFFLTLLFLLSVSNLVQAARGGGKLKPQQCNSKCSFRCSATSHKKPCMFFCLKCCKKCLCVPPGTFGNKQTCPCYNNWKTKEGRPKCP</sequence>
<proteinExistence type="evidence at transcript level"/>
<accession>Q84J95</accession>
<protein>
    <recommendedName>
        <fullName>Gibberellin-regulated protein 5</fullName>
    </recommendedName>
    <alternativeName>
        <fullName>GAST1 protein homolog 5</fullName>
    </alternativeName>
</protein>
<comment type="function">
    <text evidence="2 3">Gibberellin-regulated protein that acts as a negative regulator of gibberellin-induced flowering and stem growth. May inhibit flowering and inflorescence growth via a pathway involving GAI and by enhancing FLC expression and repressing FT and LFY. Acts as a negative regulator in thermotolerance by resogulating both salicylic acid (SA) signaling and heat shock-protein accumulation.</text>
</comment>
<comment type="subcellular location">
    <subcellularLocation>
        <location evidence="2">Secreted</location>
    </subcellularLocation>
    <subcellularLocation>
        <location evidence="2">Secreted</location>
        <location evidence="2">Cell wall</location>
    </subcellularLocation>
    <subcellularLocation>
        <location evidence="2">Secreted</location>
        <location evidence="2">Extracellular space</location>
        <location evidence="2">Extracellular matrix</location>
    </subcellularLocation>
</comment>
<comment type="tissue specificity">
    <text evidence="2">Expressed in roots, root hairs, vasculature of cotyledons and hypocotyls, shoot apex, leaf veins, stems, flower receptacles, pollen, filaments, anthers and siliques.</text>
</comment>
<comment type="induction">
    <text evidence="2">Down-regulated by gibberellin.</text>
</comment>
<comment type="PTM">
    <text>Six disulfide bonds may be present.</text>
</comment>
<comment type="disruption phenotype">
    <text evidence="2">Early flowering.</text>
</comment>
<comment type="similarity">
    <text evidence="4">Belongs to the GASA family.</text>
</comment>
<dbReference type="EMBL" id="AC018363">
    <property type="status" value="NOT_ANNOTATED_CDS"/>
    <property type="molecule type" value="Genomic_DNA"/>
</dbReference>
<dbReference type="EMBL" id="CP002686">
    <property type="protein sequence ID" value="AEE73874.1"/>
    <property type="molecule type" value="Genomic_DNA"/>
</dbReference>
<dbReference type="EMBL" id="BT002786">
    <property type="protein sequence ID" value="AAO22614.1"/>
    <property type="molecule type" value="mRNA"/>
</dbReference>
<dbReference type="EMBL" id="BT004355">
    <property type="protein sequence ID" value="AAO42349.1"/>
    <property type="molecule type" value="mRNA"/>
</dbReference>
<dbReference type="RefSeq" id="NP_566186.1">
    <property type="nucleotide sequence ID" value="NM_111158.4"/>
</dbReference>
<dbReference type="SMR" id="Q84J95"/>
<dbReference type="BioGRID" id="6527">
    <property type="interactions" value="1"/>
</dbReference>
<dbReference type="IntAct" id="Q84J95">
    <property type="interactions" value="1"/>
</dbReference>
<dbReference type="STRING" id="3702.Q84J95"/>
<dbReference type="PaxDb" id="3702-AT3G02885.1"/>
<dbReference type="ProteomicsDB" id="247391"/>
<dbReference type="EnsemblPlants" id="AT3G02885.1">
    <property type="protein sequence ID" value="AT3G02885.1"/>
    <property type="gene ID" value="AT3G02885"/>
</dbReference>
<dbReference type="GeneID" id="821194"/>
<dbReference type="Gramene" id="AT3G02885.1">
    <property type="protein sequence ID" value="AT3G02885.1"/>
    <property type="gene ID" value="AT3G02885"/>
</dbReference>
<dbReference type="KEGG" id="ath:AT3G02885"/>
<dbReference type="Araport" id="AT3G02885"/>
<dbReference type="TAIR" id="AT3G02885">
    <property type="gene designation" value="GASA5"/>
</dbReference>
<dbReference type="eggNOG" id="ENOG502S3SC">
    <property type="taxonomic scope" value="Eukaryota"/>
</dbReference>
<dbReference type="HOGENOM" id="CLU_142643_5_0_1"/>
<dbReference type="InParanoid" id="Q84J95"/>
<dbReference type="OMA" id="SDCKPRC"/>
<dbReference type="OrthoDB" id="1886938at2759"/>
<dbReference type="PhylomeDB" id="Q84J95"/>
<dbReference type="PRO" id="PR:Q84J95"/>
<dbReference type="Proteomes" id="UP000006548">
    <property type="component" value="Chromosome 3"/>
</dbReference>
<dbReference type="ExpressionAtlas" id="Q84J95">
    <property type="expression patterns" value="baseline and differential"/>
</dbReference>
<dbReference type="GO" id="GO:0005576">
    <property type="term" value="C:extracellular region"/>
    <property type="evidence" value="ECO:0007669"/>
    <property type="project" value="UniProtKB-SubCell"/>
</dbReference>
<dbReference type="GO" id="GO:0009506">
    <property type="term" value="C:plasmodesma"/>
    <property type="evidence" value="ECO:0007005"/>
    <property type="project" value="TAIR"/>
</dbReference>
<dbReference type="GO" id="GO:0009740">
    <property type="term" value="P:gibberellic acid mediated signaling pathway"/>
    <property type="evidence" value="ECO:0007669"/>
    <property type="project" value="UniProtKB-KW"/>
</dbReference>
<dbReference type="GO" id="GO:0010286">
    <property type="term" value="P:heat acclimation"/>
    <property type="evidence" value="ECO:0000315"/>
    <property type="project" value="TAIR"/>
</dbReference>
<dbReference type="GO" id="GO:0009408">
    <property type="term" value="P:response to heat"/>
    <property type="evidence" value="ECO:0000315"/>
    <property type="project" value="TAIR"/>
</dbReference>
<dbReference type="GO" id="GO:0009751">
    <property type="term" value="P:response to salicylic acid"/>
    <property type="evidence" value="ECO:0000315"/>
    <property type="project" value="TAIR"/>
</dbReference>
<dbReference type="InterPro" id="IPR003854">
    <property type="entry name" value="GASA"/>
</dbReference>
<dbReference type="PANTHER" id="PTHR23201">
    <property type="entry name" value="EXTENSIN, PROLINE-RICH PROTEIN"/>
    <property type="match status" value="1"/>
</dbReference>
<dbReference type="PANTHER" id="PTHR23201:SF60">
    <property type="entry name" value="GIBBERELLIN-REGULATED PROTEIN 5"/>
    <property type="match status" value="1"/>
</dbReference>
<dbReference type="Pfam" id="PF02704">
    <property type="entry name" value="GASA"/>
    <property type="match status" value="1"/>
</dbReference>